<dbReference type="EMBL" id="BC072355">
    <property type="protein sequence ID" value="AAH72355.1"/>
    <property type="molecule type" value="mRNA"/>
</dbReference>
<dbReference type="RefSeq" id="NP_001085081.1">
    <property type="nucleotide sequence ID" value="NM_001091612.1"/>
</dbReference>
<dbReference type="SMR" id="Q6INC8"/>
<dbReference type="GlyCosmos" id="Q6INC8">
    <property type="glycosylation" value="1 site, No reported glycans"/>
</dbReference>
<dbReference type="DNASU" id="432152"/>
<dbReference type="AGR" id="Xenbase:XB-GENE-6493995"/>
<dbReference type="Xenbase" id="XB-GENE-6493995">
    <property type="gene designation" value="slc17a7.S"/>
</dbReference>
<dbReference type="OMA" id="YNSYMHG"/>
<dbReference type="OrthoDB" id="2985014at2759"/>
<dbReference type="Proteomes" id="UP000186698">
    <property type="component" value="Unplaced"/>
</dbReference>
<dbReference type="Bgee" id="432152">
    <property type="expression patterns" value="Expressed in brain and 5 other cell types or tissues"/>
</dbReference>
<dbReference type="GO" id="GO:0034707">
    <property type="term" value="C:chloride channel complex"/>
    <property type="evidence" value="ECO:0007669"/>
    <property type="project" value="UniProtKB-KW"/>
</dbReference>
<dbReference type="GO" id="GO:0060076">
    <property type="term" value="C:excitatory synapse"/>
    <property type="evidence" value="ECO:0000318"/>
    <property type="project" value="GO_Central"/>
</dbReference>
<dbReference type="GO" id="GO:0043005">
    <property type="term" value="C:neuron projection"/>
    <property type="evidence" value="ECO:0007669"/>
    <property type="project" value="UniProtKB-KW"/>
</dbReference>
<dbReference type="GO" id="GO:0005886">
    <property type="term" value="C:plasma membrane"/>
    <property type="evidence" value="ECO:0007669"/>
    <property type="project" value="UniProtKB-SubCell"/>
</dbReference>
<dbReference type="GO" id="GO:0030672">
    <property type="term" value="C:synaptic vesicle membrane"/>
    <property type="evidence" value="ECO:0000250"/>
    <property type="project" value="UniProtKB"/>
</dbReference>
<dbReference type="GO" id="GO:0005254">
    <property type="term" value="F:chloride channel activity"/>
    <property type="evidence" value="ECO:0000250"/>
    <property type="project" value="UniProtKB"/>
</dbReference>
<dbReference type="GO" id="GO:0005313">
    <property type="term" value="F:L-glutamate transmembrane transporter activity"/>
    <property type="evidence" value="ECO:0000318"/>
    <property type="project" value="GO_Central"/>
</dbReference>
<dbReference type="GO" id="GO:0140788">
    <property type="term" value="F:L-glutamate uniporter activity"/>
    <property type="evidence" value="ECO:0000250"/>
    <property type="project" value="UniProtKB"/>
</dbReference>
<dbReference type="GO" id="GO:0005326">
    <property type="term" value="F:neurotransmitter transmembrane transporter activity"/>
    <property type="evidence" value="ECO:0000318"/>
    <property type="project" value="GO_Central"/>
</dbReference>
<dbReference type="GO" id="GO:0140787">
    <property type="term" value="F:phosphate ion uniporter activity"/>
    <property type="evidence" value="ECO:0000250"/>
    <property type="project" value="UniProtKB"/>
</dbReference>
<dbReference type="GO" id="GO:0015386">
    <property type="term" value="F:potassium:proton antiporter activity"/>
    <property type="evidence" value="ECO:0000250"/>
    <property type="project" value="UniProtKB"/>
</dbReference>
<dbReference type="GO" id="GO:0005436">
    <property type="term" value="F:sodium:phosphate symporter activity"/>
    <property type="evidence" value="ECO:0000250"/>
    <property type="project" value="UniProtKB"/>
</dbReference>
<dbReference type="GO" id="GO:0006821">
    <property type="term" value="P:chloride transport"/>
    <property type="evidence" value="ECO:0000250"/>
    <property type="project" value="UniProtKB"/>
</dbReference>
<dbReference type="GO" id="GO:0015813">
    <property type="term" value="P:L-glutamate transmembrane transport"/>
    <property type="evidence" value="ECO:0000250"/>
    <property type="project" value="UniProtKB"/>
</dbReference>
<dbReference type="GO" id="GO:0098700">
    <property type="term" value="P:neurotransmitter loading into synaptic vesicle"/>
    <property type="evidence" value="ECO:0000318"/>
    <property type="project" value="GO_Central"/>
</dbReference>
<dbReference type="GO" id="GO:0006817">
    <property type="term" value="P:phosphate ion transport"/>
    <property type="evidence" value="ECO:0000250"/>
    <property type="project" value="UniProtKB"/>
</dbReference>
<dbReference type="GO" id="GO:0006813">
    <property type="term" value="P:potassium ion transport"/>
    <property type="evidence" value="ECO:0000250"/>
    <property type="project" value="UniProtKB"/>
</dbReference>
<dbReference type="GO" id="GO:0050803">
    <property type="term" value="P:regulation of synapse structure or activity"/>
    <property type="evidence" value="ECO:0000318"/>
    <property type="project" value="GO_Central"/>
</dbReference>
<dbReference type="GO" id="GO:0044341">
    <property type="term" value="P:sodium-dependent phosphate transport"/>
    <property type="evidence" value="ECO:0000250"/>
    <property type="project" value="UniProtKB"/>
</dbReference>
<dbReference type="GO" id="GO:0035249">
    <property type="term" value="P:synaptic transmission, glutamatergic"/>
    <property type="evidence" value="ECO:0000318"/>
    <property type="project" value="GO_Central"/>
</dbReference>
<dbReference type="CDD" id="cd17382">
    <property type="entry name" value="MFS_SLC17A6_7_8_VGluT"/>
    <property type="match status" value="1"/>
</dbReference>
<dbReference type="FunFam" id="1.20.1250.20:FF:000004">
    <property type="entry name" value="vesicular glutamate transporter 2 isoform X1"/>
    <property type="match status" value="1"/>
</dbReference>
<dbReference type="FunFam" id="1.20.1250.20:FF:000005">
    <property type="entry name" value="vesicular glutamate transporter 2 isoform X1"/>
    <property type="match status" value="1"/>
</dbReference>
<dbReference type="Gene3D" id="1.20.1250.20">
    <property type="entry name" value="MFS general substrate transporter like domains"/>
    <property type="match status" value="2"/>
</dbReference>
<dbReference type="InterPro" id="IPR011701">
    <property type="entry name" value="MFS"/>
</dbReference>
<dbReference type="InterPro" id="IPR020846">
    <property type="entry name" value="MFS_dom"/>
</dbReference>
<dbReference type="InterPro" id="IPR050382">
    <property type="entry name" value="MFS_Na/Anion_cotransporter"/>
</dbReference>
<dbReference type="InterPro" id="IPR036259">
    <property type="entry name" value="MFS_trans_sf"/>
</dbReference>
<dbReference type="PANTHER" id="PTHR11662">
    <property type="entry name" value="SOLUTE CARRIER FAMILY 17"/>
    <property type="match status" value="1"/>
</dbReference>
<dbReference type="PANTHER" id="PTHR11662:SF29">
    <property type="entry name" value="VESICULAR GLUTAMATE TRANSPORTER 1"/>
    <property type="match status" value="1"/>
</dbReference>
<dbReference type="Pfam" id="PF07690">
    <property type="entry name" value="MFS_1"/>
    <property type="match status" value="1"/>
</dbReference>
<dbReference type="SUPFAM" id="SSF103473">
    <property type="entry name" value="MFS general substrate transporter"/>
    <property type="match status" value="1"/>
</dbReference>
<dbReference type="PROSITE" id="PS50850">
    <property type="entry name" value="MFS"/>
    <property type="match status" value="1"/>
</dbReference>
<accession>Q6INC8</accession>
<gene>
    <name evidence="1" type="primary">slc17a7</name>
    <name type="synonym">vglut1</name>
</gene>
<comment type="function">
    <text evidence="1 2">Multifunctional transporter that transports L-glutamate as well as multiple ions such as chloride, proton, potassium, sodium and phosphate. At the synaptic vesicle membrane, mainly functions as an uniporter which transports preferentially L-glutamate but also phosphate from the cytoplasm into synaptic vesicles at presynaptic nerve terminals of excitatory neural cells. The L-glutamate or phosphate uniporter activity is electrogenic and is driven by the proton electrochemical gradient, mainly by the electrical gradient established by the vacuolar H(+)-ATPase across the synaptic vesicle membrane. In addition, functions as a chloride channel that allows a chloride permeation through the synaptic vesicle membrane that affects the proton electrochemical gradient and promotes synaptic vesicles acidification. Moreover, may function as a K(+)/H(+) antiport allowing to maintain the electrical gradient and to decrease chemical gradient and therefore sustain vesicular glutamate uptake. The vesicular K(+)/H(+) antiport activity is electroneutral. At the plasma membrane, following exocytosis, functions as a symporter of Na(+) and phosphate from the extracellular space to the cytoplasm allowing synaptic phosphate homeostasis regulation. The symporter activity is driven by an inside negative membrane potential and is electrogenic (By similarity). Is necessary for synaptic signaling of visual-evoked responses from photoreceptors (By similarity).</text>
</comment>
<comment type="catalytic activity">
    <reaction evidence="2">
        <text>L-glutamate(out) = L-glutamate(in)</text>
        <dbReference type="Rhea" id="RHEA:66336"/>
        <dbReference type="ChEBI" id="CHEBI:29985"/>
    </reaction>
</comment>
<comment type="catalytic activity">
    <reaction evidence="2">
        <text>chloride(in) = chloride(out)</text>
        <dbReference type="Rhea" id="RHEA:29823"/>
        <dbReference type="ChEBI" id="CHEBI:17996"/>
    </reaction>
</comment>
<comment type="catalytic activity">
    <reaction evidence="2">
        <text>3 Na(+)(out) + phosphate(out) = 3 Na(+)(in) + phosphate(in)</text>
        <dbReference type="Rhea" id="RHEA:71255"/>
        <dbReference type="ChEBI" id="CHEBI:29101"/>
        <dbReference type="ChEBI" id="CHEBI:43474"/>
    </reaction>
</comment>
<comment type="catalytic activity">
    <reaction evidence="2">
        <text>phosphate(in) = phosphate(out)</text>
        <dbReference type="Rhea" id="RHEA:32823"/>
        <dbReference type="ChEBI" id="CHEBI:43474"/>
    </reaction>
</comment>
<comment type="catalytic activity">
    <reaction evidence="2">
        <text>K(+)(in) + H(+)(out) = K(+)(out) + H(+)(in)</text>
        <dbReference type="Rhea" id="RHEA:29467"/>
        <dbReference type="ChEBI" id="CHEBI:15378"/>
        <dbReference type="ChEBI" id="CHEBI:29103"/>
    </reaction>
</comment>
<comment type="activity regulation">
    <text evidence="2">Chloride channel activity is allosterically activated by lumenal H(+) and Cl(-) leading to synaptic vesicles acidification. The L-glutamate transport activity is allosterically activated by lumenal H(+) and Cl(-). The allosteric activation by H(+) efficiently prevents non-vesicular efflux across the plasma membrane, thereby restricting L-glutamate transport activity to acidic membranes such as synaptic vesicles.</text>
</comment>
<comment type="subcellular location">
    <subcellularLocation>
        <location evidence="2">Cytoplasmic vesicle</location>
        <location evidence="2">Secretory vesicle</location>
        <location evidence="2">Synaptic vesicle membrane</location>
    </subcellularLocation>
    <subcellularLocation>
        <location evidence="2">Cell membrane</location>
        <topology evidence="2">Multi-pass membrane protein</topology>
    </subcellularLocation>
    <subcellularLocation>
        <location evidence="2">Synapse</location>
        <location evidence="2">Synaptosome</location>
    </subcellularLocation>
</comment>
<comment type="similarity">
    <text evidence="5">Belongs to the major facilitator superfamily. Sodium/anion cotransporter family. VGLUT subfamily.</text>
</comment>
<comment type="caution">
    <text evidence="1 2">Martineau M. et al. show that may function as a L-glutamate/H(+) antiporter (By similarity). However, according to Eriksen J. et al., H(+) is an allosteric activator (By similarity).</text>
</comment>
<feature type="chain" id="PRO_0000318174" description="Vesicular glutamate transporter 1">
    <location>
        <begin position="1"/>
        <end position="576"/>
    </location>
</feature>
<feature type="topological domain" description="Cytoplasmic" evidence="3">
    <location>
        <begin position="1"/>
        <end position="63"/>
    </location>
</feature>
<feature type="transmembrane region" description="Helical" evidence="3">
    <location>
        <begin position="64"/>
        <end position="84"/>
    </location>
</feature>
<feature type="topological domain" description="Vesicular" evidence="3">
    <location>
        <begin position="85"/>
        <end position="116"/>
    </location>
</feature>
<feature type="transmembrane region" description="Helical" evidence="3">
    <location>
        <begin position="117"/>
        <end position="137"/>
    </location>
</feature>
<feature type="topological domain" description="Cytoplasmic" evidence="3">
    <location>
        <begin position="138"/>
        <end position="140"/>
    </location>
</feature>
<feature type="transmembrane region" description="Helical" evidence="3">
    <location>
        <begin position="141"/>
        <end position="161"/>
    </location>
</feature>
<feature type="topological domain" description="Vesicular" evidence="3">
    <location>
        <begin position="162"/>
        <end position="168"/>
    </location>
</feature>
<feature type="transmembrane region" description="Helical" evidence="3">
    <location>
        <begin position="169"/>
        <end position="189"/>
    </location>
</feature>
<feature type="topological domain" description="Cytoplasmic" evidence="3">
    <location>
        <begin position="190"/>
        <end position="208"/>
    </location>
</feature>
<feature type="transmembrane region" description="Helical" evidence="3">
    <location>
        <begin position="209"/>
        <end position="229"/>
    </location>
</feature>
<feature type="topological domain" description="Vesicular" evidence="3">
    <location>
        <begin position="230"/>
        <end position="236"/>
    </location>
</feature>
<feature type="transmembrane region" description="Helical" evidence="3">
    <location>
        <begin position="237"/>
        <end position="257"/>
    </location>
</feature>
<feature type="topological domain" description="Cytoplasmic" evidence="3">
    <location>
        <begin position="258"/>
        <end position="297"/>
    </location>
</feature>
<feature type="transmembrane region" description="Helical" evidence="3">
    <location>
        <begin position="298"/>
        <end position="320"/>
    </location>
</feature>
<feature type="topological domain" description="Vesicular" evidence="3">
    <location>
        <begin position="321"/>
        <end position="341"/>
    </location>
</feature>
<feature type="transmembrane region" description="Helical" evidence="3">
    <location>
        <begin position="342"/>
        <end position="362"/>
    </location>
</feature>
<feature type="topological domain" description="Cytoplasmic" evidence="3">
    <location>
        <begin position="363"/>
        <end position="378"/>
    </location>
</feature>
<feature type="transmembrane region" description="Helical" evidence="3">
    <location>
        <begin position="379"/>
        <end position="399"/>
    </location>
</feature>
<feature type="topological domain" description="Vesicular" evidence="3">
    <location>
        <begin position="400"/>
        <end position="401"/>
    </location>
</feature>
<feature type="transmembrane region" description="Helical" evidence="3">
    <location>
        <begin position="402"/>
        <end position="422"/>
    </location>
</feature>
<feature type="topological domain" description="Cytoplasmic" evidence="3">
    <location>
        <begin position="423"/>
        <end position="435"/>
    </location>
</feature>
<feature type="transmembrane region" description="Helical" evidence="3">
    <location>
        <begin position="436"/>
        <end position="456"/>
    </location>
</feature>
<feature type="topological domain" description="Vesicular" evidence="3">
    <location>
        <begin position="457"/>
        <end position="469"/>
    </location>
</feature>
<feature type="transmembrane region" description="Helical" evidence="3">
    <location>
        <begin position="470"/>
        <end position="490"/>
    </location>
</feature>
<feature type="topological domain" description="Cytoplasmic" evidence="3">
    <location>
        <begin position="491"/>
        <end position="576"/>
    </location>
</feature>
<feature type="region of interest" description="Disordered" evidence="4">
    <location>
        <begin position="517"/>
        <end position="552"/>
    </location>
</feature>
<feature type="compositionally biased region" description="Polar residues" evidence="4">
    <location>
        <begin position="534"/>
        <end position="545"/>
    </location>
</feature>
<feature type="glycosylation site" description="N-linked (GlcNAc...) asparagine" evidence="3">
    <location>
        <position position="93"/>
    </location>
</feature>
<reference key="1">
    <citation type="submission" date="2004-06" db="EMBL/GenBank/DDBJ databases">
        <authorList>
            <consortium name="NIH - Xenopus Gene Collection (XGC) project"/>
        </authorList>
    </citation>
    <scope>NUCLEOTIDE SEQUENCE [LARGE SCALE MRNA]</scope>
    <source>
        <tissue>Eye</tissue>
    </source>
</reference>
<organism>
    <name type="scientific">Xenopus laevis</name>
    <name type="common">African clawed frog</name>
    <dbReference type="NCBI Taxonomy" id="8355"/>
    <lineage>
        <taxon>Eukaryota</taxon>
        <taxon>Metazoa</taxon>
        <taxon>Chordata</taxon>
        <taxon>Craniata</taxon>
        <taxon>Vertebrata</taxon>
        <taxon>Euteleostomi</taxon>
        <taxon>Amphibia</taxon>
        <taxon>Batrachia</taxon>
        <taxon>Anura</taxon>
        <taxon>Pipoidea</taxon>
        <taxon>Pipidae</taxon>
        <taxon>Xenopodinae</taxon>
        <taxon>Xenopus</taxon>
        <taxon>Xenopus</taxon>
    </lineage>
</organism>
<name>VGLU1_XENLA</name>
<proteinExistence type="evidence at transcript level"/>
<evidence type="ECO:0000250" key="1">
    <source>
        <dbReference type="UniProtKB" id="Q3TXX4"/>
    </source>
</evidence>
<evidence type="ECO:0000250" key="2">
    <source>
        <dbReference type="UniProtKB" id="Q62634"/>
    </source>
</evidence>
<evidence type="ECO:0000255" key="3"/>
<evidence type="ECO:0000256" key="4">
    <source>
        <dbReference type="SAM" id="MobiDB-lite"/>
    </source>
</evidence>
<evidence type="ECO:0000305" key="5"/>
<sequence length="576" mass="63906">MEFRKEEFKKLAGNTLGHLHRILEKKQKNGETIELTEEGQPVVKEEKHQPVVDCTCFGLPRRYIIAIMSGLGFCISFGIRCNLGVAIVSMVNNNTVYKGNKLVIEQAQFNWDPETVGMIHGSFFWGYIVTQIPGGYICQKFAANRVFGFAIVATSTLNMLIPSAARVHFACVICVRILQGLVEGVTYPACHGIWSKWAPPLERSRLATTAFCGSYAGAVVAMPLAGVLVQYSGWSSVFYVYGSFGITWYMFWILVSYESPAQHPTISEEERKYIEESIGESTGFMNPMAKFKAPWRKFFTSMPVYAIIVANFCRSWTFYLLLISQPAYFEEVFGFAISKVGLLSALPHLVMTIIVPIGGQIADFLRTKRIMSTTNVRKMMNCGGFGMEATLLLVVGYSHSRGVAISFLVLAVGFSGFAISGFNVNHLDIAPRYASILMGISNGVGTLSGMVCPLIVGAMTKHKTREEWQYVFLIASLVHYGGVVFYGIFASGEKQPWAEPEETSDEKCGFIHEDELADESEEQTQAHGGYGSYGATQTTSQQNGGWATDWEKKDEFIQDQGKDPYLYGTVAERDLS</sequence>
<protein>
    <recommendedName>
        <fullName evidence="1">Vesicular glutamate transporter 1</fullName>
        <shortName evidence="1">VGluT1</shortName>
    </recommendedName>
    <alternativeName>
        <fullName>Solute carrier family 17 member 7</fullName>
    </alternativeName>
</protein>
<keyword id="KW-0050">Antiport</keyword>
<keyword id="KW-1003">Cell membrane</keyword>
<keyword id="KW-0868">Chloride</keyword>
<keyword id="KW-0869">Chloride channel</keyword>
<keyword id="KW-0968">Cytoplasmic vesicle</keyword>
<keyword id="KW-0325">Glycoprotein</keyword>
<keyword id="KW-0407">Ion channel</keyword>
<keyword id="KW-0406">Ion transport</keyword>
<keyword id="KW-0472">Membrane</keyword>
<keyword id="KW-0532">Neurotransmitter transport</keyword>
<keyword id="KW-0592">Phosphate transport</keyword>
<keyword id="KW-1185">Reference proteome</keyword>
<keyword id="KW-0915">Sodium</keyword>
<keyword id="KW-0739">Sodium transport</keyword>
<keyword id="KW-0769">Symport</keyword>
<keyword id="KW-0770">Synapse</keyword>
<keyword id="KW-0771">Synaptosome</keyword>
<keyword id="KW-0812">Transmembrane</keyword>
<keyword id="KW-1133">Transmembrane helix</keyword>
<keyword id="KW-0813">Transport</keyword>